<reference key="1">
    <citation type="journal article" date="2002" name="BMC Genomics">
        <title>Cynomolgus monkey testicular cDNAs for discovery of novel human genes in the human genome sequence.</title>
        <authorList>
            <person name="Osada N."/>
            <person name="Hida M."/>
            <person name="Kusuda J."/>
            <person name="Tanuma R."/>
            <person name="Hirata M."/>
            <person name="Suto Y."/>
            <person name="Hirai M."/>
            <person name="Terao K."/>
            <person name="Sugano S."/>
            <person name="Hashimoto K."/>
        </authorList>
    </citation>
    <scope>NUCLEOTIDE SEQUENCE [LARGE SCALE MRNA] (ISOFORM 1)</scope>
    <source>
        <tissue>Testis</tissue>
    </source>
</reference>
<reference key="2">
    <citation type="journal article" date="2011" name="Nat. Biotechnol.">
        <title>Genome sequencing and comparison of two nonhuman primate animal models, the cynomolgus and Chinese rhesus macaques.</title>
        <authorList>
            <person name="Yan G."/>
            <person name="Zhang G."/>
            <person name="Fang X."/>
            <person name="Zhang Y."/>
            <person name="Li C."/>
            <person name="Ling F."/>
            <person name="Cooper D.N."/>
            <person name="Li Q."/>
            <person name="Li Y."/>
            <person name="van Gool A.J."/>
            <person name="Du H."/>
            <person name="Chen J."/>
            <person name="Chen R."/>
            <person name="Zhang P."/>
            <person name="Huang Z."/>
            <person name="Thompson J.R."/>
            <person name="Meng Y."/>
            <person name="Bai Y."/>
            <person name="Wang J."/>
            <person name="Zhuo M."/>
            <person name="Wang T."/>
            <person name="Huang Y."/>
            <person name="Wei L."/>
            <person name="Li J."/>
            <person name="Wang Z."/>
            <person name="Hu H."/>
            <person name="Yang P."/>
            <person name="Le L."/>
            <person name="Stenson P.D."/>
            <person name="Li B."/>
            <person name="Liu X."/>
            <person name="Ball E.V."/>
            <person name="An N."/>
            <person name="Huang Q."/>
            <person name="Zhang Y."/>
            <person name="Fan W."/>
            <person name="Zhang X."/>
            <person name="Li Y."/>
            <person name="Wang W."/>
            <person name="Katze M.G."/>
            <person name="Su B."/>
            <person name="Nielsen R."/>
            <person name="Yang H."/>
            <person name="Wang J."/>
            <person name="Wang X."/>
            <person name="Wang J."/>
        </authorList>
    </citation>
    <scope>NUCLEOTIDE SEQUENCE [LARGE SCALE GENOMIC DNA]</scope>
</reference>
<reference key="3">
    <citation type="submission" date="2001-07" db="EMBL/GenBank/DDBJ databases">
        <title>Isolation of novel full-length cDNA clones from macaque testis cDNA libraries.</title>
        <authorList>
            <person name="Hashimoto K."/>
            <person name="Osada N."/>
            <person name="Hida M."/>
            <person name="Kusuda J."/>
            <person name="Tanuma R."/>
            <person name="Hirai M."/>
            <person name="Terao K."/>
            <person name="Suzuki Y."/>
            <person name="Sugano S."/>
        </authorList>
    </citation>
    <scope>NUCLEOTIDE SEQUENCE [LARGE SCALE MRNA] OF 323-874 (ISOFORM 1)</scope>
    <scope>NUCLEOTIDE SEQUENCE [LARGE SCALE MRNA] OF 412-874 (ISOFORM 2)</scope>
    <source>
        <tissue>Testis</tissue>
    </source>
</reference>
<dbReference type="EMBL" id="AB070170">
    <property type="protein sequence ID" value="BAB63115.1"/>
    <property type="molecule type" value="mRNA"/>
</dbReference>
<dbReference type="EMBL" id="CM001295">
    <property type="protein sequence ID" value="EHH60425.1"/>
    <property type="molecule type" value="Genomic_DNA"/>
</dbReference>
<dbReference type="EMBL" id="AB066552">
    <property type="protein sequence ID" value="BAB84027.1"/>
    <property type="status" value="ALT_INIT"/>
    <property type="molecule type" value="mRNA"/>
</dbReference>
<dbReference type="EMBL" id="AB066553">
    <property type="protein sequence ID" value="BAB84028.1"/>
    <property type="status" value="ALT_INIT"/>
    <property type="molecule type" value="mRNA"/>
</dbReference>
<dbReference type="SMR" id="Q95JL1"/>
<dbReference type="STRING" id="9541.ENSMFAP00000038197"/>
<dbReference type="Ensembl" id="ENSMFAT00000012452.2">
    <molecule id="Q95JL1-1"/>
    <property type="protein sequence ID" value="ENSMFAP00000038197.2"/>
    <property type="gene ID" value="ENSMFAG00000038450.2"/>
</dbReference>
<dbReference type="Ensembl" id="ENSMFAT00000075614.1">
    <molecule id="Q95JL1-2"/>
    <property type="protein sequence ID" value="ENSMFAP00000049085.1"/>
    <property type="gene ID" value="ENSMFAG00000038450.2"/>
</dbReference>
<dbReference type="eggNOG" id="ENOG502QRNZ">
    <property type="taxonomic scope" value="Eukaryota"/>
</dbReference>
<dbReference type="GeneTree" id="ENSGT00390000004913"/>
<dbReference type="Proteomes" id="UP000009130">
    <property type="component" value="Chromosome 20"/>
</dbReference>
<dbReference type="Proteomes" id="UP000233100">
    <property type="component" value="Chromosome 20"/>
</dbReference>
<dbReference type="Bgee" id="ENSMFAG00000038450">
    <property type="expression patterns" value="Expressed in multicellular organism"/>
</dbReference>
<dbReference type="GO" id="GO:0005737">
    <property type="term" value="C:cytoplasm"/>
    <property type="evidence" value="ECO:0007669"/>
    <property type="project" value="UniProtKB-KW"/>
</dbReference>
<dbReference type="GO" id="GO:0005856">
    <property type="term" value="C:cytoskeleton"/>
    <property type="evidence" value="ECO:0007669"/>
    <property type="project" value="UniProtKB-KW"/>
</dbReference>
<dbReference type="GO" id="GO:0031514">
    <property type="term" value="C:motile cilium"/>
    <property type="evidence" value="ECO:0007669"/>
    <property type="project" value="UniProtKB-SubCell"/>
</dbReference>
<dbReference type="GO" id="GO:0030317">
    <property type="term" value="P:flagellated sperm motility"/>
    <property type="evidence" value="ECO:0000250"/>
    <property type="project" value="UniProtKB"/>
</dbReference>
<dbReference type="GO" id="GO:0007288">
    <property type="term" value="P:sperm axoneme assembly"/>
    <property type="evidence" value="ECO:0000250"/>
    <property type="project" value="UniProtKB"/>
</dbReference>
<dbReference type="GO" id="GO:0007283">
    <property type="term" value="P:spermatogenesis"/>
    <property type="evidence" value="ECO:0000250"/>
    <property type="project" value="UniProtKB"/>
</dbReference>
<dbReference type="InterPro" id="IPR056290">
    <property type="entry name" value="CEPT76/DRC7_peptidase-like_dom"/>
</dbReference>
<dbReference type="InterPro" id="IPR033551">
    <property type="entry name" value="DRC7/lobo"/>
</dbReference>
<dbReference type="InterPro" id="IPR056292">
    <property type="entry name" value="DRC7_C"/>
</dbReference>
<dbReference type="InterPro" id="IPR056291">
    <property type="entry name" value="MORN_DRC7"/>
</dbReference>
<dbReference type="InterPro" id="IPR038765">
    <property type="entry name" value="Papain-like_cys_pep_sf"/>
</dbReference>
<dbReference type="PANTHER" id="PTHR35249">
    <property type="entry name" value="DYNEIN REGULATORY COMPLEX SUBUNIT 7"/>
    <property type="match status" value="1"/>
</dbReference>
<dbReference type="PANTHER" id="PTHR35249:SF2">
    <property type="entry name" value="DYNEIN REGULATORY COMPLEX SUBUNIT 7"/>
    <property type="match status" value="1"/>
</dbReference>
<dbReference type="Pfam" id="PF24656">
    <property type="entry name" value="CEPT76_peptidase"/>
    <property type="match status" value="1"/>
</dbReference>
<dbReference type="Pfam" id="PF24671">
    <property type="entry name" value="DRC7_C"/>
    <property type="match status" value="1"/>
</dbReference>
<dbReference type="Pfam" id="PF24667">
    <property type="entry name" value="MORN_DRC7"/>
    <property type="match status" value="1"/>
</dbReference>
<dbReference type="SUPFAM" id="SSF54001">
    <property type="entry name" value="Cysteine proteinases"/>
    <property type="match status" value="1"/>
</dbReference>
<keyword id="KW-0025">Alternative splicing</keyword>
<keyword id="KW-0966">Cell projection</keyword>
<keyword id="KW-0969">Cilium</keyword>
<keyword id="KW-0175">Coiled coil</keyword>
<keyword id="KW-0963">Cytoplasm</keyword>
<keyword id="KW-0206">Cytoskeleton</keyword>
<keyword id="KW-0221">Differentiation</keyword>
<keyword id="KW-0282">Flagellum</keyword>
<keyword id="KW-1185">Reference proteome</keyword>
<keyword id="KW-0744">Spermatogenesis</keyword>
<accession>Q95JL1</accession>
<accession>G7Q187</accession>
<accession>Q8WNU2</accession>
<accession>Q8WNU3</accession>
<comment type="function">
    <text evidence="1 2">Component of the nexin-dynein regulatory complex (N-DRC) a key regulator of ciliary/flagellar motility which maintains the alignment and integrity of the distal axoneme and regulates microtubule sliding in motile axonemes (By similarity). Involved in the regulation of flagellar motility (By similarity). Essential for male fertility, sperm head morphogenesis and sperm flagellum formation (By similarity).</text>
</comment>
<comment type="subunit">
    <text evidence="1 2">Component of the nexin-dynein regulatory complex (N-DRC). Interacts with TCTE1/DRC5 (By similarity). Interacts with DRC3 and GAS8/DRC4 (By similarity).</text>
</comment>
<comment type="subcellular location">
    <subcellularLocation>
        <location evidence="1">Cell projection</location>
        <location evidence="1">Cilium</location>
        <location evidence="1">Flagellum</location>
    </subcellularLocation>
    <subcellularLocation>
        <location evidence="1">Cytoplasm</location>
        <location evidence="1">Cytoskeleton</location>
        <location evidence="1">Cilium axoneme</location>
    </subcellularLocation>
    <subcellularLocation>
        <location evidence="1">Cytoplasm</location>
        <location evidence="1">Cytoskeleton</location>
        <location evidence="1">Flagellum axoneme</location>
    </subcellularLocation>
    <text evidence="1">Associated with the outer doublet microtubules (OD).</text>
</comment>
<comment type="alternative products">
    <event type="alternative splicing"/>
    <isoform>
        <id>Q95JL1-1</id>
        <name>1</name>
        <sequence type="displayed"/>
    </isoform>
    <isoform>
        <id>Q95JL1-2</id>
        <name>2</name>
        <sequence type="described" ref="VSP_023439"/>
    </isoform>
</comment>
<comment type="similarity">
    <text evidence="6">Belongs to the DRC7 family.</text>
</comment>
<comment type="sequence caution" evidence="6">
    <conflict type="erroneous initiation">
        <sequence resource="EMBL-CDS" id="BAB84027"/>
    </conflict>
    <text>Truncated N-terminus.</text>
</comment>
<comment type="sequence caution" evidence="6">
    <conflict type="erroneous initiation">
        <sequence resource="EMBL-CDS" id="BAB84028"/>
    </conflict>
    <text>Truncated N-terminus.</text>
</comment>
<sequence>MEVLREKVEEEEEAEREEAAKRAEWARTEKMMRPVEVRKEETTLTQEMLRDLEKKLSEIQIPISAELPAFTKDTIDISKLPVSYKTNTPKEEHLLQVADNFSRQYSHLCPDRVPLFLHPLNECEVPKFVSTTLRPTLMPYPELYNWDSCAQFVSDFLTMVPLPDPLKPPSHLYSSTTVLNYQKGNCFDFSTMLCSMLIGSGYDAYCVNGYGSLDLCHMDLTREVCPLTVKPKETVQKEEKVLPKKYTIRPPRDLCSRFEQEQEVKKQQEIRAQEKKQLREEEERLMEAEKAKPDALHGLRVHSWVLVLSGKREVPENFFIDAFTGHSYSTQDERFLGIESLWNHKNYWINMQDCWNCCKDLIFDLGDPVRWEYMLLGTDKSQLSLTEEDDSGINDEDDVENLGKEDEDKSFDMPHSWVEQIEISPEAFETRCPNGKKVIQYKRAKLEKWAPYLNSNGLVSRLTTYEDLECTNILEIKEWYQNREDMLELKHINKTTDLKIDYFKPGHPQALRVHSYKSMQPEMDRVIEFYETARVDGLIKREETARTMTEYYQGRPDFLSYRHANFRPRVKKLALSSAESNPRPIVKITEQFFRNPAKPAEEDVAERVFLLAEERIQLRYHCRDDHITASKREFLRRTEVDSKGNKIIMTPDMCISFEVEPMEHTKKLLYQYEAMMHLKREEKLSRHQVWESELEVLEILKLREEEEAAHTLTISIYDTKRNEKSKEYREAMERVMHEEHLRQVETQLDYLAPFLAQLPPGEKLTRWQAVRLKDECLSDFKQRLINKANLIQARFEKETQELQKKQQWYQENQVTLTPEDEDLYLSYCSQAMFRIRILEQRLNRHKELAPLKYLALEEKLYKDPRLGELQKIFA</sequence>
<feature type="chain" id="PRO_0000279435" description="Dynein regulatory complex subunit 7">
    <location>
        <begin position="1"/>
        <end position="874"/>
    </location>
</feature>
<feature type="region of interest" description="Disordered" evidence="4">
    <location>
        <begin position="1"/>
        <end position="22"/>
    </location>
</feature>
<feature type="region of interest" description="Disordered" evidence="4">
    <location>
        <begin position="386"/>
        <end position="410"/>
    </location>
</feature>
<feature type="coiled-coil region" evidence="3">
    <location>
        <begin position="1"/>
        <end position="60"/>
    </location>
</feature>
<feature type="coiled-coil region" evidence="3">
    <location>
        <begin position="257"/>
        <end position="297"/>
    </location>
</feature>
<feature type="coiled-coil region" evidence="3">
    <location>
        <begin position="688"/>
        <end position="711"/>
    </location>
</feature>
<feature type="coiled-coil region" evidence="3">
    <location>
        <begin position="781"/>
        <end position="807"/>
    </location>
</feature>
<feature type="compositionally biased region" description="Acidic residues" evidence="4">
    <location>
        <begin position="386"/>
        <end position="400"/>
    </location>
</feature>
<feature type="compositionally biased region" description="Basic and acidic residues" evidence="4">
    <location>
        <begin position="401"/>
        <end position="410"/>
    </location>
</feature>
<feature type="splice variant" id="VSP_023439" description="In isoform 2." evidence="5">
    <location>
        <begin position="658"/>
        <end position="694"/>
    </location>
</feature>
<feature type="sequence conflict" description="In Ref. 3; BAB84028." evidence="6" ref="3">
    <original>P</original>
    <variation>S</variation>
    <location>
        <position position="508"/>
    </location>
</feature>
<feature type="sequence conflict" description="In Ref. 1; BAB63115." evidence="6" ref="1">
    <original>A</original>
    <variation>T</variation>
    <location>
        <position position="510"/>
    </location>
</feature>
<feature type="sequence conflict" description="In Ref. 3; BAB84027." evidence="6" ref="3">
    <original>V</original>
    <variation>M</variation>
    <location>
        <position position="513"/>
    </location>
</feature>
<feature type="sequence conflict" description="In Ref. 1; BAB63115." evidence="6" ref="1">
    <original>I</original>
    <variation>T</variation>
    <location>
        <position position="791"/>
    </location>
</feature>
<name>DRC7_MACFA</name>
<gene>
    <name type="primary">DRC7</name>
    <name type="synonym">CCDC135</name>
    <name type="ORF">QtsA-13114</name>
    <name type="ORF">QtsA-13183</name>
    <name type="ORF">QtsA-15805</name>
</gene>
<protein>
    <recommendedName>
        <fullName>Dynein regulatory complex subunit 7</fullName>
    </recommendedName>
    <alternativeName>
        <fullName>Coiled-coil domain-containing protein 135</fullName>
    </alternativeName>
    <alternativeName>
        <fullName>Coiled-coil domain-containing protein lobo homolog</fullName>
    </alternativeName>
</protein>
<evidence type="ECO:0000250" key="1">
    <source>
        <dbReference type="UniProtKB" id="A8JAM0"/>
    </source>
</evidence>
<evidence type="ECO:0000250" key="2">
    <source>
        <dbReference type="UniProtKB" id="Q6V3W6"/>
    </source>
</evidence>
<evidence type="ECO:0000255" key="3"/>
<evidence type="ECO:0000256" key="4">
    <source>
        <dbReference type="SAM" id="MobiDB-lite"/>
    </source>
</evidence>
<evidence type="ECO:0000303" key="5">
    <source ref="3"/>
</evidence>
<evidence type="ECO:0000305" key="6"/>
<proteinExistence type="evidence at transcript level"/>
<organism>
    <name type="scientific">Macaca fascicularis</name>
    <name type="common">Crab-eating macaque</name>
    <name type="synonym">Cynomolgus monkey</name>
    <dbReference type="NCBI Taxonomy" id="9541"/>
    <lineage>
        <taxon>Eukaryota</taxon>
        <taxon>Metazoa</taxon>
        <taxon>Chordata</taxon>
        <taxon>Craniata</taxon>
        <taxon>Vertebrata</taxon>
        <taxon>Euteleostomi</taxon>
        <taxon>Mammalia</taxon>
        <taxon>Eutheria</taxon>
        <taxon>Euarchontoglires</taxon>
        <taxon>Primates</taxon>
        <taxon>Haplorrhini</taxon>
        <taxon>Catarrhini</taxon>
        <taxon>Cercopithecidae</taxon>
        <taxon>Cercopithecinae</taxon>
        <taxon>Macaca</taxon>
    </lineage>
</organism>